<evidence type="ECO:0000250" key="1">
    <source>
        <dbReference type="UniProtKB" id="P06454"/>
    </source>
</evidence>
<evidence type="ECO:0000255" key="2"/>
<evidence type="ECO:0000256" key="3">
    <source>
        <dbReference type="SAM" id="MobiDB-lite"/>
    </source>
</evidence>
<evidence type="ECO:0000269" key="4">
    <source>
    </source>
</evidence>
<evidence type="ECO:0000269" key="5">
    <source>
    </source>
</evidence>
<evidence type="ECO:0000303" key="6">
    <source>
    </source>
</evidence>
<evidence type="ECO:0000305" key="7"/>
<evidence type="ECO:0000312" key="8">
    <source>
        <dbReference type="EMBL" id="AAI42848.1"/>
    </source>
</evidence>
<sequence length="106" mass="11781">MADAKVDSATEISAKDLKEKKLIEEKENGKDATNGKENEENGEPEIDDEDDDEVDEDDEEGEGDEDEDEDDDDEDLGGGTKRGADDDEDEDEDDEDDVDPKKQKVN</sequence>
<feature type="chain" id="PRO_0000365453" description="Prothymosin alpha-B">
    <location>
        <begin position="1"/>
        <end position="106"/>
    </location>
</feature>
<feature type="region of interest" description="Disordered" evidence="3">
    <location>
        <begin position="1"/>
        <end position="106"/>
    </location>
</feature>
<feature type="compositionally biased region" description="Basic and acidic residues" evidence="3">
    <location>
        <begin position="1"/>
        <end position="39"/>
    </location>
</feature>
<feature type="compositionally biased region" description="Acidic residues" evidence="3">
    <location>
        <begin position="40"/>
        <end position="76"/>
    </location>
</feature>
<feature type="compositionally biased region" description="Acidic residues" evidence="3">
    <location>
        <begin position="85"/>
        <end position="98"/>
    </location>
</feature>
<feature type="modified residue" description="Phosphoserine" evidence="4">
    <location>
        <position position="8"/>
    </location>
</feature>
<feature type="modified residue" description="Phosphothreonine" evidence="4">
    <location>
        <position position="10"/>
    </location>
</feature>
<gene>
    <name evidence="6" type="primary">ptmab</name>
    <name type="ORF">zgc:165530</name>
</gene>
<keyword id="KW-0539">Nucleus</keyword>
<keyword id="KW-0597">Phosphoprotein</keyword>
<keyword id="KW-1185">Reference proteome</keyword>
<accession>A5PLC8</accession>
<reference evidence="8" key="1">
    <citation type="submission" date="2007-06" db="EMBL/GenBank/DDBJ databases">
        <authorList>
            <consortium name="NIH - Zebrafish Gene Collection (ZGC) project"/>
        </authorList>
    </citation>
    <scope>NUCLEOTIDE SEQUENCE [LARGE SCALE MRNA]</scope>
    <source>
        <tissue evidence="8">Larval eye</tissue>
    </source>
</reference>
<reference evidence="7" key="2">
    <citation type="journal article" date="2008" name="Dev. Dyn.">
        <title>Differential expression of duplicated genes for prothymosin alpha during zebrafish development.</title>
        <authorList>
            <person name="Donizetti A."/>
            <person name="Liccardo D."/>
            <person name="Esposito D."/>
            <person name="Del Gaudio R."/>
            <person name="Locascio A."/>
            <person name="Ferrara D."/>
            <person name="Minucci S."/>
            <person name="Aniello F."/>
        </authorList>
    </citation>
    <scope>IDENTIFICATION AS PTMAB</scope>
    <scope>TISSUE SPECIFICITY</scope>
    <scope>DEVELOPMENTAL STAGE</scope>
</reference>
<reference evidence="7" key="3">
    <citation type="journal article" date="2008" name="J. Proteome Res.">
        <title>Online automated in vivo zebrafish phosphoproteomics: from large-scale analysis down to a single embryo.</title>
        <authorList>
            <person name="Lemeer S."/>
            <person name="Pinkse M.W.H."/>
            <person name="Mohammed S."/>
            <person name="van Breukelen B."/>
            <person name="den Hertog J."/>
            <person name="Slijper M."/>
            <person name="Heck A.J.R."/>
        </authorList>
    </citation>
    <scope>PHOSPHORYLATION [LARGE SCALE ANALYSIS] AT SER-8 AND THR-10</scope>
    <scope>IDENTIFICATION BY MASS SPECTROMETRY</scope>
    <source>
        <tissue evidence="4">Embryo</tissue>
    </source>
</reference>
<comment type="subcellular location">
    <subcellularLocation>
        <location evidence="1">Nucleus</location>
    </subcellularLocation>
</comment>
<comment type="tissue specificity">
    <text evidence="5">Uniformly expressed in all embryonic cells at 4 and 8 hpf. At the 20-somite stage (18 hpf), ubiquitously expressed in the developing nervous system, in the tail bud and in the pronephric ducts. Also expressed in some placodes, including the anterior lateral line placode, otic vesicle and olfactory placode. At 27 hpf, strong expression persists in the central nervous system and the olfactory placode. Expressed strongly in the eyes and the pectoral fin buds. In the tail region, expressed in the spinal cord, in the posterior lateral line precursors, and persists in the pronephric ducts. At 48 hpf, expressed in all head territories including the developing brain, eyes, and pharyngeal arches. More caudally, expression persists in the pectoral fin buds, the spinal cord and, for the first time, appears in the intestine. At 72 hpf, expressed only in restricted regions of the brain, in pharyngeal arches region and in the amacrine cells and the horizontal cells of the retina.</text>
</comment>
<comment type="developmental stage">
    <text evidence="5">Expressed both maternally and zygotically. First expressed at 4 hpf. Expression is lower by 8 hpf and increases almost constantly thereafter.</text>
</comment>
<comment type="similarity">
    <text evidence="2">Belongs to the pro/parathymosin family.</text>
</comment>
<name>PTMAB_DANRE</name>
<proteinExistence type="evidence at protein level"/>
<protein>
    <recommendedName>
        <fullName evidence="6">Prothymosin alpha-B</fullName>
    </recommendedName>
</protein>
<dbReference type="EMBL" id="BC142847">
    <property type="protein sequence ID" value="AAI42848.1"/>
    <property type="molecule type" value="mRNA"/>
</dbReference>
<dbReference type="RefSeq" id="NP_001092200.1">
    <property type="nucleotide sequence ID" value="NM_001098730.1"/>
</dbReference>
<dbReference type="SMR" id="A5PLC8"/>
<dbReference type="STRING" id="7955.ENSDARP00000137701"/>
<dbReference type="iPTMnet" id="A5PLC8"/>
<dbReference type="PaxDb" id="7955-ENSDARP00000103236"/>
<dbReference type="PeptideAtlas" id="A5PLC8"/>
<dbReference type="Ensembl" id="ENSDART00000164039">
    <property type="protein sequence ID" value="ENSDARP00000137701"/>
    <property type="gene ID" value="ENSDARG00000101766"/>
</dbReference>
<dbReference type="GeneID" id="559194"/>
<dbReference type="KEGG" id="dre:559194"/>
<dbReference type="AGR" id="ZFIN:ZDB-GENE-030131-8681"/>
<dbReference type="CTD" id="559194"/>
<dbReference type="ZFIN" id="ZDB-GENE-030131-8681">
    <property type="gene designation" value="ptmab"/>
</dbReference>
<dbReference type="eggNOG" id="ENOG502S5G1">
    <property type="taxonomic scope" value="Eukaryota"/>
</dbReference>
<dbReference type="HOGENOM" id="CLU_136539_0_1_1"/>
<dbReference type="InParanoid" id="A5PLC8"/>
<dbReference type="OMA" id="AKMQKTH"/>
<dbReference type="PRO" id="PR:A5PLC8"/>
<dbReference type="Proteomes" id="UP000000437">
    <property type="component" value="Chromosome 2"/>
</dbReference>
<dbReference type="Bgee" id="ENSDARG00000101766">
    <property type="expression patterns" value="Expressed in camera-type eye and 45 other cell types or tissues"/>
</dbReference>
<dbReference type="GO" id="GO:0005634">
    <property type="term" value="C:nucleus"/>
    <property type="evidence" value="ECO:0000314"/>
    <property type="project" value="ZFIN"/>
</dbReference>
<dbReference type="GO" id="GO:0042393">
    <property type="term" value="F:histone binding"/>
    <property type="evidence" value="ECO:0000318"/>
    <property type="project" value="GO_Central"/>
</dbReference>
<dbReference type="GO" id="GO:0006915">
    <property type="term" value="P:apoptotic process"/>
    <property type="evidence" value="ECO:0000315"/>
    <property type="project" value="ZFIN"/>
</dbReference>
<dbReference type="GO" id="GO:0043066">
    <property type="term" value="P:negative regulation of apoptotic process"/>
    <property type="evidence" value="ECO:0000318"/>
    <property type="project" value="GO_Central"/>
</dbReference>
<dbReference type="GO" id="GO:0045944">
    <property type="term" value="P:positive regulation of transcription by RNA polymerase II"/>
    <property type="evidence" value="ECO:0000318"/>
    <property type="project" value="GO_Central"/>
</dbReference>
<dbReference type="InterPro" id="IPR004931">
    <property type="entry name" value="Pro/parathymosin"/>
</dbReference>
<dbReference type="PANTHER" id="PTHR22745">
    <property type="entry name" value="PROTHYMOSIN ALPHA"/>
    <property type="match status" value="1"/>
</dbReference>
<dbReference type="PANTHER" id="PTHR22745:SF13">
    <property type="entry name" value="PROTHYMOSIN ALPHA-B"/>
    <property type="match status" value="1"/>
</dbReference>
<dbReference type="Pfam" id="PF03247">
    <property type="entry name" value="Prothymosin"/>
    <property type="match status" value="1"/>
</dbReference>
<organism>
    <name type="scientific">Danio rerio</name>
    <name type="common">Zebrafish</name>
    <name type="synonym">Brachydanio rerio</name>
    <dbReference type="NCBI Taxonomy" id="7955"/>
    <lineage>
        <taxon>Eukaryota</taxon>
        <taxon>Metazoa</taxon>
        <taxon>Chordata</taxon>
        <taxon>Craniata</taxon>
        <taxon>Vertebrata</taxon>
        <taxon>Euteleostomi</taxon>
        <taxon>Actinopterygii</taxon>
        <taxon>Neopterygii</taxon>
        <taxon>Teleostei</taxon>
        <taxon>Ostariophysi</taxon>
        <taxon>Cypriniformes</taxon>
        <taxon>Danionidae</taxon>
        <taxon>Danioninae</taxon>
        <taxon>Danio</taxon>
    </lineage>
</organism>